<keyword id="KW-0256">Endoplasmic reticulum</keyword>
<keyword id="KW-0275">Fatty acid biosynthesis</keyword>
<keyword id="KW-0276">Fatty acid metabolism</keyword>
<keyword id="KW-0444">Lipid biosynthesis</keyword>
<keyword id="KW-0443">Lipid metabolism</keyword>
<keyword id="KW-0472">Membrane</keyword>
<keyword id="KW-0521">NADP</keyword>
<keyword id="KW-0560">Oxidoreductase</keyword>
<keyword id="KW-0812">Transmembrane</keyword>
<keyword id="KW-1133">Transmembrane helix</keyword>
<name>MKAR_CRYNB</name>
<organism>
    <name type="scientific">Cryptococcus neoformans var. neoformans serotype D (strain B-3501A)</name>
    <name type="common">Filobasidiella neoformans</name>
    <dbReference type="NCBI Taxonomy" id="283643"/>
    <lineage>
        <taxon>Eukaryota</taxon>
        <taxon>Fungi</taxon>
        <taxon>Dikarya</taxon>
        <taxon>Basidiomycota</taxon>
        <taxon>Agaricomycotina</taxon>
        <taxon>Tremellomycetes</taxon>
        <taxon>Tremellales</taxon>
        <taxon>Cryptococcaceae</taxon>
        <taxon>Cryptococcus</taxon>
        <taxon>Cryptococcus neoformans species complex</taxon>
    </lineage>
</organism>
<sequence>MVADTVHVGQHLAGHPSVHLFGHEIVLDVSIPALILSTVGAAFLLRYTLSIFRLFLELTVLPGKDIKSFQSRKGETWAVVTGCTSGIGLEFARQLAAKKFNIILVGRRQSALTDLSKEIESKYDVHTKSVTVDVSTPGSARDDALTQLELLAQNLDVGILINNVGASHSMPVAFHETERSEMSRIIETNVTWTYLVTRSILPSMVARSKQKGAPKSLVITIGSLSGRIPSPLLASYSGTKAALATWTKALAEEVKPQGVIVELVQAAFVVSNMSKIRKSSPFVPTPAPFVRSTLNSIGLPRGAQGRPHERTPFWSHAILDYVVGFAGYVSEMAGIKVILGMHKDIRKRALKKAARDEKKAE</sequence>
<comment type="function">
    <text evidence="4">Component of the microsomal membrane bound fatty acid elongation system, which produces the 26-carbon very long-chain fatty acids (VLCFA) from palmitate. Catalyzes the reduction of the 3-ketoacyl-CoA intermediate that is formed in each cycle of fatty acid elongation. VLCFAs serve as precursors for ceramide and sphingolipids.</text>
</comment>
<comment type="catalytic activity">
    <reaction evidence="4">
        <text>a very-long-chain (3R)-3-hydroxyacyl-CoA + NADP(+) = a very-long-chain 3-oxoacyl-CoA + NADPH + H(+)</text>
        <dbReference type="Rhea" id="RHEA:48680"/>
        <dbReference type="ChEBI" id="CHEBI:15378"/>
        <dbReference type="ChEBI" id="CHEBI:57783"/>
        <dbReference type="ChEBI" id="CHEBI:58349"/>
        <dbReference type="ChEBI" id="CHEBI:85440"/>
        <dbReference type="ChEBI" id="CHEBI:90725"/>
        <dbReference type="EC" id="1.1.1.330"/>
    </reaction>
</comment>
<comment type="pathway">
    <text evidence="3">Lipid metabolism; fatty acid biosynthesis.</text>
</comment>
<comment type="subcellular location">
    <subcellularLocation>
        <location evidence="4">Endoplasmic reticulum membrane</location>
        <topology evidence="4">Single-pass membrane protein</topology>
    </subcellularLocation>
</comment>
<comment type="similarity">
    <text evidence="4">Belongs to the short-chain dehydrogenases/reductases (SDR) family.</text>
</comment>
<proteinExistence type="inferred from homology"/>
<protein>
    <recommendedName>
        <fullName evidence="4">Very-long-chain 3-oxoacyl-CoA reductase</fullName>
        <ecNumber evidence="4">1.1.1.330</ecNumber>
    </recommendedName>
    <alternativeName>
        <fullName evidence="4">3-ketoacyl-CoA reductase</fullName>
        <shortName evidence="4">3-ketoreductase</shortName>
        <shortName evidence="4">KAR</shortName>
    </alternativeName>
    <alternativeName>
        <fullName evidence="4">Microsomal beta-keto-reductase</fullName>
    </alternativeName>
</protein>
<feature type="chain" id="PRO_0000410279" description="Very-long-chain 3-oxoacyl-CoA reductase">
    <location>
        <begin position="1"/>
        <end position="361"/>
    </location>
</feature>
<feature type="transmembrane region" description="Helical" evidence="4">
    <location>
        <begin position="32"/>
        <end position="52"/>
    </location>
</feature>
<feature type="active site" description="Proton donor" evidence="2">
    <location>
        <position position="236"/>
    </location>
</feature>
<feature type="active site" description="Lowers pKa of active site Tyr" evidence="2">
    <location>
        <position position="240"/>
    </location>
</feature>
<feature type="binding site" evidence="1">
    <location>
        <position position="79"/>
    </location>
    <ligand>
        <name>NADP(+)</name>
        <dbReference type="ChEBI" id="CHEBI:58349"/>
    </ligand>
</feature>
<feature type="binding site" evidence="1">
    <location>
        <position position="133"/>
    </location>
    <ligand>
        <name>NADP(+)</name>
        <dbReference type="ChEBI" id="CHEBI:58349"/>
    </ligand>
</feature>
<feature type="binding site" evidence="2">
    <location>
        <position position="163"/>
    </location>
    <ligand>
        <name>NADP(+)</name>
        <dbReference type="ChEBI" id="CHEBI:58349"/>
    </ligand>
</feature>
<feature type="binding site" evidence="1">
    <location>
        <position position="198"/>
    </location>
    <ligand>
        <name>NADP(+)</name>
        <dbReference type="ChEBI" id="CHEBI:58349"/>
    </ligand>
</feature>
<feature type="binding site" evidence="2">
    <location>
        <position position="236"/>
    </location>
    <ligand>
        <name>NADP(+)</name>
        <dbReference type="ChEBI" id="CHEBI:58349"/>
    </ligand>
</feature>
<feature type="binding site" evidence="2">
    <location>
        <position position="240"/>
    </location>
    <ligand>
        <name>NADP(+)</name>
        <dbReference type="ChEBI" id="CHEBI:58349"/>
    </ligand>
</feature>
<feature type="binding site" evidence="2">
    <location>
        <position position="269"/>
    </location>
    <ligand>
        <name>NADP(+)</name>
        <dbReference type="ChEBI" id="CHEBI:58349"/>
    </ligand>
</feature>
<feature type="binding site" evidence="1">
    <location>
        <position position="271"/>
    </location>
    <ligand>
        <name>NADP(+)</name>
        <dbReference type="ChEBI" id="CHEBI:58349"/>
    </ligand>
</feature>
<reference key="1">
    <citation type="journal article" date="2005" name="Science">
        <title>The genome of the basidiomycetous yeast and human pathogen Cryptococcus neoformans.</title>
        <authorList>
            <person name="Loftus B.J."/>
            <person name="Fung E."/>
            <person name="Roncaglia P."/>
            <person name="Rowley D."/>
            <person name="Amedeo P."/>
            <person name="Bruno D."/>
            <person name="Vamathevan J."/>
            <person name="Miranda M."/>
            <person name="Anderson I.J."/>
            <person name="Fraser J.A."/>
            <person name="Allen J.E."/>
            <person name="Bosdet I.E."/>
            <person name="Brent M.R."/>
            <person name="Chiu R."/>
            <person name="Doering T.L."/>
            <person name="Donlin M.J."/>
            <person name="D'Souza C.A."/>
            <person name="Fox D.S."/>
            <person name="Grinberg V."/>
            <person name="Fu J."/>
            <person name="Fukushima M."/>
            <person name="Haas B.J."/>
            <person name="Huang J.C."/>
            <person name="Janbon G."/>
            <person name="Jones S.J.M."/>
            <person name="Koo H.L."/>
            <person name="Krzywinski M.I."/>
            <person name="Kwon-Chung K.J."/>
            <person name="Lengeler K.B."/>
            <person name="Maiti R."/>
            <person name="Marra M.A."/>
            <person name="Marra R.E."/>
            <person name="Mathewson C.A."/>
            <person name="Mitchell T.G."/>
            <person name="Pertea M."/>
            <person name="Riggs F.R."/>
            <person name="Salzberg S.L."/>
            <person name="Schein J.E."/>
            <person name="Shvartsbeyn A."/>
            <person name="Shin H."/>
            <person name="Shumway M."/>
            <person name="Specht C.A."/>
            <person name="Suh B.B."/>
            <person name="Tenney A."/>
            <person name="Utterback T.R."/>
            <person name="Wickes B.L."/>
            <person name="Wortman J.R."/>
            <person name="Wye N.H."/>
            <person name="Kronstad J.W."/>
            <person name="Lodge J.K."/>
            <person name="Heitman J."/>
            <person name="Davis R.W."/>
            <person name="Fraser C.M."/>
            <person name="Hyman R.W."/>
        </authorList>
    </citation>
    <scope>NUCLEOTIDE SEQUENCE [LARGE SCALE GENOMIC DNA]</scope>
    <source>
        <strain>B-3501A</strain>
    </source>
</reference>
<accession>P0CR35</accession>
<accession>Q55NM3</accession>
<accession>Q5KC11</accession>
<evidence type="ECO:0000250" key="1">
    <source>
        <dbReference type="UniProtKB" id="L0E2Z4"/>
    </source>
</evidence>
<evidence type="ECO:0000250" key="2">
    <source>
        <dbReference type="UniProtKB" id="O93868"/>
    </source>
</evidence>
<evidence type="ECO:0000250" key="3">
    <source>
        <dbReference type="UniProtKB" id="P38286"/>
    </source>
</evidence>
<evidence type="ECO:0000255" key="4">
    <source>
        <dbReference type="HAMAP-Rule" id="MF_03107"/>
    </source>
</evidence>
<gene>
    <name type="ordered locus">CNBH0660</name>
</gene>
<dbReference type="EC" id="1.1.1.330" evidence="4"/>
<dbReference type="EMBL" id="AAEY01000041">
    <property type="protein sequence ID" value="EAL19372.1"/>
    <property type="molecule type" value="Genomic_DNA"/>
</dbReference>
<dbReference type="RefSeq" id="XP_774019.1">
    <property type="nucleotide sequence ID" value="XM_768926.1"/>
</dbReference>
<dbReference type="SMR" id="P0CR35"/>
<dbReference type="EnsemblFungi" id="AAW45449">
    <property type="protein sequence ID" value="AAW45449"/>
    <property type="gene ID" value="CNI00690"/>
</dbReference>
<dbReference type="GeneID" id="4937584"/>
<dbReference type="KEGG" id="cnb:CNBH0660"/>
<dbReference type="VEuPathDB" id="FungiDB:CNBH0660"/>
<dbReference type="HOGENOM" id="CLU_010194_38_0_1"/>
<dbReference type="OrthoDB" id="3226at5206"/>
<dbReference type="UniPathway" id="UPA00094"/>
<dbReference type="GO" id="GO:0005789">
    <property type="term" value="C:endoplasmic reticulum membrane"/>
    <property type="evidence" value="ECO:0007669"/>
    <property type="project" value="UniProtKB-SubCell"/>
</dbReference>
<dbReference type="GO" id="GO:0045703">
    <property type="term" value="F:ketoreductase activity"/>
    <property type="evidence" value="ECO:0007669"/>
    <property type="project" value="UniProtKB-UniRule"/>
</dbReference>
<dbReference type="GO" id="GO:0141040">
    <property type="term" value="F:very-long-chain 3-oxoacyl-CoA reductase activity"/>
    <property type="evidence" value="ECO:0007669"/>
    <property type="project" value="UniProtKB-EC"/>
</dbReference>
<dbReference type="GO" id="GO:0030497">
    <property type="term" value="P:fatty acid elongation"/>
    <property type="evidence" value="ECO:0007669"/>
    <property type="project" value="UniProtKB-UniRule"/>
</dbReference>
<dbReference type="CDD" id="cd05356">
    <property type="entry name" value="17beta-HSD1_like_SDR_c"/>
    <property type="match status" value="1"/>
</dbReference>
<dbReference type="FunFam" id="3.40.50.720:FF:000640">
    <property type="entry name" value="Very-long-chain 3-oxoacyl-CoA reductase"/>
    <property type="match status" value="1"/>
</dbReference>
<dbReference type="Gene3D" id="3.40.50.720">
    <property type="entry name" value="NAD(P)-binding Rossmann-like Domain"/>
    <property type="match status" value="1"/>
</dbReference>
<dbReference type="HAMAP" id="MF_03107">
    <property type="entry name" value="3_ketoreductase"/>
    <property type="match status" value="1"/>
</dbReference>
<dbReference type="InterPro" id="IPR027533">
    <property type="entry name" value="3_ketoreductase_fungal"/>
</dbReference>
<dbReference type="InterPro" id="IPR036291">
    <property type="entry name" value="NAD(P)-bd_dom_sf"/>
</dbReference>
<dbReference type="InterPro" id="IPR020904">
    <property type="entry name" value="Sc_DH/Rdtase_CS"/>
</dbReference>
<dbReference type="InterPro" id="IPR002347">
    <property type="entry name" value="SDR_fam"/>
</dbReference>
<dbReference type="PANTHER" id="PTHR43086:SF2">
    <property type="entry name" value="HYDROXYSTEROID DEHYDROGENASE-LIKE PROTEIN 1"/>
    <property type="match status" value="1"/>
</dbReference>
<dbReference type="PANTHER" id="PTHR43086">
    <property type="entry name" value="VERY-LONG-CHAIN 3-OXOOACYL-COA REDUCTASE"/>
    <property type="match status" value="1"/>
</dbReference>
<dbReference type="Pfam" id="PF00106">
    <property type="entry name" value="adh_short"/>
    <property type="match status" value="1"/>
</dbReference>
<dbReference type="PIRSF" id="PIRSF000126">
    <property type="entry name" value="11-beta-HSD1"/>
    <property type="match status" value="1"/>
</dbReference>
<dbReference type="PRINTS" id="PR00081">
    <property type="entry name" value="GDHRDH"/>
</dbReference>
<dbReference type="PRINTS" id="PR00080">
    <property type="entry name" value="SDRFAMILY"/>
</dbReference>
<dbReference type="SUPFAM" id="SSF51735">
    <property type="entry name" value="NAD(P)-binding Rossmann-fold domains"/>
    <property type="match status" value="1"/>
</dbReference>
<dbReference type="PROSITE" id="PS00061">
    <property type="entry name" value="ADH_SHORT"/>
    <property type="match status" value="1"/>
</dbReference>